<sequence length="883" mass="99347">MHPFSRLFRNIQSLEEEVQELLGPPEDALPLLAGEDLNHRVADALNLHLPTADLQWVHKTNAITGLYSNQAAQFNPNWIQPEFPELHLHNDLIQKLQQYFGPLTINEKRKLQLNFPARFFPKATKYFPLIKGIKNHYPNFALEHFFATANYLWTLWEAGILYLRKNQTTLTFKGKPYSWEHRQLVQHNGQQHKSHLQSRQNSSMVACSGHLLHNHLSSESVSVSTRNLSNNISDKSQKSTRTGLCSYKQIQTDRLEHLARISCGSKIFIGQQGSSPKTLYKSISSNFRNQTWAYNSSRNSGHTTWFSSASNSNKSRSREKAYSSNSTSKRYSPPLNYEKSDFSSPGVRRRITRLDNNGTPTQCLSRSFYNTKPCGSYCIHHIVSSLDDWGPCTVTGDVTIKSPRTPRRITGGVFLVDKNPNNSSESRLVVHFSQFSRGHTRVHWPKFAVPNLQTLANLLSTNLQWLSLDVSAAFYHIPISPAAVPHLLVGSPGLERFNTCLSSSTHNRNNSQLQTMHNLCTRHVYSSLLLLFKTYGRKLHLLAHPFIMGFRKLPMGVGLSSSLLAQFTSALASMVRRNFPHCVVFAYMDDLVLGARTSEHLTAIYSHICSVFLDLGIHLNVNKTKWWGNHLHFMGYVITSSGVLPQDKHVKKISRYLLSVPVNQPLDYKISERLTGILNYVAPFTLCGYAALMPLYHAIASRMAFIFSSLYKSWLLSLYEELWPVVRQRGVVCTVFADATPTGWGIATTCQLLSGTYAFPLPIATAELIAACLARCWTGARLLGTDNSVVLSGKLTSFPWLLACVATWILRGTSFCYVPSALNPADLPSRGLLPALRPLPRLRLRPQTTRISLWAASPPVSPRAPVRVAWSSPVQTCEPWIPP</sequence>
<dbReference type="EC" id="2.7.7.7" evidence="1"/>
<dbReference type="EC" id="2.7.7.49" evidence="1"/>
<dbReference type="EC" id="3.1.26.4" evidence="1"/>
<dbReference type="EMBL" id="M11082">
    <property type="protein sequence ID" value="AAA19183.1"/>
    <property type="molecule type" value="Unassigned_DNA"/>
</dbReference>
<dbReference type="PIR" id="A00708">
    <property type="entry name" value="JDVLC2"/>
</dbReference>
<dbReference type="Proteomes" id="UP000007632">
    <property type="component" value="Genome"/>
</dbReference>
<dbReference type="GO" id="GO:0003677">
    <property type="term" value="F:DNA binding"/>
    <property type="evidence" value="ECO:0007669"/>
    <property type="project" value="UniProtKB-UniRule"/>
</dbReference>
<dbReference type="GO" id="GO:0003887">
    <property type="term" value="F:DNA-directed DNA polymerase activity"/>
    <property type="evidence" value="ECO:0007669"/>
    <property type="project" value="UniProtKB-UniRule"/>
</dbReference>
<dbReference type="GO" id="GO:0046872">
    <property type="term" value="F:metal ion binding"/>
    <property type="evidence" value="ECO:0007669"/>
    <property type="project" value="UniProtKB-UniRule"/>
</dbReference>
<dbReference type="GO" id="GO:0003964">
    <property type="term" value="F:RNA-directed DNA polymerase activity"/>
    <property type="evidence" value="ECO:0007669"/>
    <property type="project" value="UniProtKB-UniRule"/>
</dbReference>
<dbReference type="GO" id="GO:0004523">
    <property type="term" value="F:RNA-DNA hybrid ribonuclease activity"/>
    <property type="evidence" value="ECO:0007669"/>
    <property type="project" value="UniProtKB-UniRule"/>
</dbReference>
<dbReference type="GO" id="GO:0006260">
    <property type="term" value="P:DNA replication"/>
    <property type="evidence" value="ECO:0007669"/>
    <property type="project" value="UniProtKB-UniRule"/>
</dbReference>
<dbReference type="GO" id="GO:0052170">
    <property type="term" value="P:symbiont-mediated suppression of host innate immune response"/>
    <property type="evidence" value="ECO:0007669"/>
    <property type="project" value="UniProtKB-UniRule"/>
</dbReference>
<dbReference type="Gene3D" id="3.30.70.270">
    <property type="match status" value="1"/>
</dbReference>
<dbReference type="HAMAP" id="MF_04073">
    <property type="entry name" value="HBV_DPOL"/>
    <property type="match status" value="1"/>
</dbReference>
<dbReference type="InterPro" id="IPR043502">
    <property type="entry name" value="DNA/RNA_pol_sf"/>
</dbReference>
<dbReference type="InterPro" id="IPR001462">
    <property type="entry name" value="DNApol_viral_C"/>
</dbReference>
<dbReference type="InterPro" id="IPR000201">
    <property type="entry name" value="DNApol_viral_N"/>
</dbReference>
<dbReference type="InterPro" id="IPR037531">
    <property type="entry name" value="HBV_DPOL"/>
</dbReference>
<dbReference type="InterPro" id="IPR052055">
    <property type="entry name" value="Hepadnavirus_pol/RT"/>
</dbReference>
<dbReference type="InterPro" id="IPR043128">
    <property type="entry name" value="Rev_trsase/Diguanyl_cyclase"/>
</dbReference>
<dbReference type="InterPro" id="IPR000477">
    <property type="entry name" value="RT_dom"/>
</dbReference>
<dbReference type="PANTHER" id="PTHR33050">
    <property type="entry name" value="REVERSE TRANSCRIPTASE DOMAIN-CONTAINING PROTEIN"/>
    <property type="match status" value="1"/>
</dbReference>
<dbReference type="PANTHER" id="PTHR33050:SF7">
    <property type="entry name" value="RIBONUCLEASE H"/>
    <property type="match status" value="1"/>
</dbReference>
<dbReference type="Pfam" id="PF00336">
    <property type="entry name" value="DNA_pol_viral_C"/>
    <property type="match status" value="1"/>
</dbReference>
<dbReference type="Pfam" id="PF00242">
    <property type="entry name" value="DNA_pol_viral_N"/>
    <property type="match status" value="1"/>
</dbReference>
<dbReference type="Pfam" id="PF00078">
    <property type="entry name" value="RVT_1"/>
    <property type="match status" value="1"/>
</dbReference>
<dbReference type="SUPFAM" id="SSF56672">
    <property type="entry name" value="DNA/RNA polymerases"/>
    <property type="match status" value="1"/>
</dbReference>
<dbReference type="PROSITE" id="PS50878">
    <property type="entry name" value="RT_POL"/>
    <property type="match status" value="1"/>
</dbReference>
<reference key="1">
    <citation type="journal article" date="1985" name="J. Virol.">
        <title>Nucleotide sequence of a cloned woodchuck hepatitis virus genome: evolutional relationship between hepadnaviruses.</title>
        <authorList>
            <person name="Kodama K."/>
            <person name="Ogasawara N."/>
            <person name="Yoshikawa H."/>
            <person name="Murakami S."/>
        </authorList>
    </citation>
    <scope>NUCLEOTIDE SEQUENCE [GENOMIC DNA]</scope>
</reference>
<reference key="2">
    <citation type="journal article" date="2007" name="World J. Gastroenterol.">
        <title>Hepatitis B virus replication.</title>
        <authorList>
            <person name="Beck J."/>
            <person name="Nassal M."/>
        </authorList>
    </citation>
    <scope>REVIEW</scope>
</reference>
<organism>
    <name type="scientific">Woodchuck hepatitis B virus (isolate 2)</name>
    <name type="common">WHV</name>
    <dbReference type="NCBI Taxonomy" id="341946"/>
    <lineage>
        <taxon>Viruses</taxon>
        <taxon>Riboviria</taxon>
        <taxon>Pararnavirae</taxon>
        <taxon>Artverviricota</taxon>
        <taxon>Revtraviricetes</taxon>
        <taxon>Blubervirales</taxon>
        <taxon>Hepadnaviridae</taxon>
        <taxon>Orthohepadnavirus</taxon>
        <taxon>Woodchuck hepatitis virus</taxon>
    </lineage>
</organism>
<proteinExistence type="inferred from homology"/>
<gene>
    <name evidence="1" type="primary">P</name>
</gene>
<name>DPOL_WHV2</name>
<keyword id="KW-0235">DNA replication</keyword>
<keyword id="KW-0238">DNA-binding</keyword>
<keyword id="KW-0239">DNA-directed DNA polymerase</keyword>
<keyword id="KW-0255">Endonuclease</keyword>
<keyword id="KW-0945">Host-virus interaction</keyword>
<keyword id="KW-0378">Hydrolase</keyword>
<keyword id="KW-1090">Inhibition of host innate immune response by virus</keyword>
<keyword id="KW-1113">Inhibition of host RLR pathway by virus</keyword>
<keyword id="KW-0460">Magnesium</keyword>
<keyword id="KW-0479">Metal-binding</keyword>
<keyword id="KW-0511">Multifunctional enzyme</keyword>
<keyword id="KW-0540">Nuclease</keyword>
<keyword id="KW-0548">Nucleotidyltransferase</keyword>
<keyword id="KW-0695">RNA-directed DNA polymerase</keyword>
<keyword id="KW-0808">Transferase</keyword>
<keyword id="KW-0899">Viral immunoevasion</keyword>
<feature type="chain" id="PRO_0000222350" description="Protein P">
    <location>
        <begin position="1"/>
        <end position="883"/>
    </location>
</feature>
<feature type="domain" description="Reverse transcriptase" evidence="1">
    <location>
        <begin position="397"/>
        <end position="638"/>
    </location>
</feature>
<feature type="region of interest" description="Terminal protein domain (TP)" evidence="1">
    <location>
        <begin position="1"/>
        <end position="183"/>
    </location>
</feature>
<feature type="region of interest" description="Spacer" evidence="1">
    <location>
        <begin position="184"/>
        <end position="386"/>
    </location>
</feature>
<feature type="region of interest" description="Disordered" evidence="2">
    <location>
        <begin position="298"/>
        <end position="344"/>
    </location>
</feature>
<feature type="region of interest" description="Polymerase/reverse transcriptase domain (RT)" evidence="1">
    <location>
        <begin position="387"/>
        <end position="728"/>
    </location>
</feature>
<feature type="binding site" evidence="1">
    <location>
        <position position="469"/>
    </location>
    <ligand>
        <name>Mg(2+)</name>
        <dbReference type="ChEBI" id="CHEBI:18420"/>
        <note>catalytic</note>
    </ligand>
</feature>
<feature type="binding site" evidence="1">
    <location>
        <position position="589"/>
    </location>
    <ligand>
        <name>Mg(2+)</name>
        <dbReference type="ChEBI" id="CHEBI:18420"/>
        <note>catalytic</note>
    </ligand>
</feature>
<feature type="binding site" evidence="1">
    <location>
        <position position="590"/>
    </location>
    <ligand>
        <name>Mg(2+)</name>
        <dbReference type="ChEBI" id="CHEBI:18420"/>
        <note>catalytic</note>
    </ligand>
</feature>
<feature type="site" description="Priming of reverse-transcription by covalently linking the first nucleotide of the (-)DNA" evidence="1">
    <location>
        <position position="67"/>
    </location>
</feature>
<comment type="function">
    <text evidence="1">Multifunctional enzyme that converts the viral RNA genome into dsDNA in viral cytoplasmic capsids. This enzyme displays a DNA polymerase activity that can copy either DNA or RNA templates, and a ribonuclease H (RNase H) activity that cleaves the RNA strand of RNA-DNA heteroduplexes in a partially processive 3'- to 5'-endonucleasic mode. Neo-synthesized pregenomic RNA (pgRNA) are encapsidated together with the P protein, and reverse-transcribed inside the nucleocapsid. Initiation of reverse-transcription occurs first by binding the epsilon loop on the pgRNA genome, and is initiated by protein priming, thereby the 5'-end of (-)DNA is covalently linked to P protein. Partial (+)DNA is synthesized from the (-)DNA template and generates the relaxed circular DNA (RC-DNA) genome. After budding and infection, the RC-DNA migrates in the nucleus, and is converted into a plasmid-like covalently closed circular DNA (cccDNA). The activity of P protein does not seem to be necessary for cccDNA generation, and is presumably released from (+)DNA by host nuclear DNA repair machinery.</text>
</comment>
<comment type="catalytic activity">
    <reaction evidence="1">
        <text>DNA(n) + a 2'-deoxyribonucleoside 5'-triphosphate = DNA(n+1) + diphosphate</text>
        <dbReference type="Rhea" id="RHEA:22508"/>
        <dbReference type="Rhea" id="RHEA-COMP:17339"/>
        <dbReference type="Rhea" id="RHEA-COMP:17340"/>
        <dbReference type="ChEBI" id="CHEBI:33019"/>
        <dbReference type="ChEBI" id="CHEBI:61560"/>
        <dbReference type="ChEBI" id="CHEBI:173112"/>
        <dbReference type="EC" id="2.7.7.7"/>
    </reaction>
</comment>
<comment type="catalytic activity">
    <reaction evidence="1">
        <text>DNA(n) + a 2'-deoxyribonucleoside 5'-triphosphate = DNA(n+1) + diphosphate</text>
        <dbReference type="Rhea" id="RHEA:22508"/>
        <dbReference type="Rhea" id="RHEA-COMP:17339"/>
        <dbReference type="Rhea" id="RHEA-COMP:17340"/>
        <dbReference type="ChEBI" id="CHEBI:33019"/>
        <dbReference type="ChEBI" id="CHEBI:61560"/>
        <dbReference type="ChEBI" id="CHEBI:173112"/>
        <dbReference type="EC" id="2.7.7.49"/>
    </reaction>
</comment>
<comment type="catalytic activity">
    <reaction evidence="1">
        <text>Endonucleolytic cleavage to 5'-phosphomonoester.</text>
        <dbReference type="EC" id="3.1.26.4"/>
    </reaction>
</comment>
<comment type="activity regulation">
    <text evidence="1">Activated by host HSP70 and HSP40 in vitro to be able to bind the epsilon loop of the pgRNA. Because deletion of the RNase H region renders the protein partly chaperone-independent, the chaperones may be needed indirectly to relieve occlusion of the RNA-binding site by this domain. Inhibited by several reverse-transcriptase inhibitors: Lamivudine, Adefovir and Entecavir.</text>
</comment>
<comment type="domain">
    <text evidence="1">Terminal protein domain (TP) is hepadnavirus-specific. Spacer domain is highly variable and separates the TP and RT domains. Polymerase/reverse-transcriptase domain (RT) and ribonuclease H domain (RH) are similar to retrovirus reverse transcriptase/RNase H.</text>
</comment>
<comment type="domain">
    <text evidence="1">The polymerase/reverse transcriptase (RT) and ribonuclease H (RH) domains are structured in five subdomains: finger, palm, thumb, connection and RNase H. Within the palm subdomain, the 'primer grip' region is thought to be involved in the positioning of the primer terminus for accommodating the incoming nucleotide. The RH domain stabilizes the association of RT with primer-template.</text>
</comment>
<comment type="miscellaneous">
    <text evidence="1">Hepadnaviral virions contain probably just one P protein molecule per particle.</text>
</comment>
<comment type="similarity">
    <text evidence="1">Belongs to the hepadnaviridae P protein family.</text>
</comment>
<organismHost>
    <name type="scientific">Marmota monax</name>
    <name type="common">Woodchuck</name>
    <dbReference type="NCBI Taxonomy" id="9995"/>
</organismHost>
<evidence type="ECO:0000255" key="1">
    <source>
        <dbReference type="HAMAP-Rule" id="MF_04073"/>
    </source>
</evidence>
<evidence type="ECO:0000256" key="2">
    <source>
        <dbReference type="SAM" id="MobiDB-lite"/>
    </source>
</evidence>
<protein>
    <recommendedName>
        <fullName evidence="1">Protein P</fullName>
    </recommendedName>
    <domain>
        <recommendedName>
            <fullName evidence="1">DNA-directed DNA polymerase</fullName>
            <ecNumber evidence="1">2.7.7.7</ecNumber>
        </recommendedName>
    </domain>
    <domain>
        <recommendedName>
            <fullName evidence="1">RNA-directed DNA polymerase</fullName>
            <ecNumber evidence="1">2.7.7.49</ecNumber>
        </recommendedName>
    </domain>
    <domain>
        <recommendedName>
            <fullName evidence="1">Ribonuclease H</fullName>
            <ecNumber evidence="1">3.1.26.4</ecNumber>
        </recommendedName>
    </domain>
</protein>
<accession>P06275</accession>